<feature type="chain" id="PRO_0000059777" description="Ig kappa chain V-III region PC 2880/PC 1229">
    <location>
        <begin position="1"/>
        <end position="111" status="greater than"/>
    </location>
</feature>
<feature type="region of interest" description="Framework-1">
    <location>
        <begin position="1"/>
        <end position="23"/>
    </location>
</feature>
<feature type="region of interest" description="Complementarity-determining-1">
    <location>
        <begin position="24"/>
        <end position="38"/>
    </location>
</feature>
<feature type="region of interest" description="Framework-2">
    <location>
        <begin position="39"/>
        <end position="53"/>
    </location>
</feature>
<feature type="region of interest" description="Complementarity-determining-2">
    <location>
        <begin position="54"/>
        <end position="60"/>
    </location>
</feature>
<feature type="region of interest" description="Framework-3">
    <location>
        <begin position="61"/>
        <end position="92"/>
    </location>
</feature>
<feature type="region of interest" description="Complementarity-determining-3">
    <location>
        <begin position="93"/>
        <end position="101"/>
    </location>
</feature>
<feature type="region of interest" description="Framework-4">
    <location>
        <begin position="102"/>
        <end position="111"/>
    </location>
</feature>
<feature type="disulfide bond" evidence="1">
    <location>
        <begin position="23"/>
        <end position="92"/>
    </location>
</feature>
<feature type="non-terminal residue">
    <location>
        <position position="111"/>
    </location>
</feature>
<reference key="1">
    <citation type="journal article" date="1978" name="Nature">
        <title>Rearrangement of genetic information may produce immunoglobulin diversity.</title>
        <authorList>
            <person name="Weigert M."/>
            <person name="Gatmaitan L."/>
            <person name="Loh E."/>
            <person name="Schilling J."/>
            <person name="Hood L.E."/>
        </authorList>
    </citation>
    <scope>PROTEIN SEQUENCE</scope>
</reference>
<comment type="miscellaneous">
    <text>The PC 2880 and PC 1229 sequences are identical.</text>
</comment>
<sequence length="111" mass="11980">DIVLTQSPASLAVSLGQRATISCRASESVDNYGISFMNWFQQKPGQPPKLLIYAASNQGSGVPARFSGSGSGTDFSLNIHPMEEDDTAMYFCQQSKEVPWTFGGGTKLEIK</sequence>
<evidence type="ECO:0000255" key="1">
    <source>
        <dbReference type="PROSITE-ProRule" id="PRU00114"/>
    </source>
</evidence>
<accession>P01654</accession>
<dbReference type="PIR" id="B93204">
    <property type="entry name" value="KVMS80"/>
</dbReference>
<dbReference type="PIR" id="PH0093">
    <property type="entry name" value="PH0093"/>
</dbReference>
<dbReference type="PIR" id="PH1079">
    <property type="entry name" value="PH1079"/>
</dbReference>
<dbReference type="PDB" id="1MF2">
    <property type="method" value="X-ray"/>
    <property type="resolution" value="2.60 A"/>
    <property type="chains" value="L/M=1-111"/>
</dbReference>
<dbReference type="PDB" id="2OR9">
    <property type="method" value="X-ray"/>
    <property type="resolution" value="2.70 A"/>
    <property type="chains" value="L/M=1-111"/>
</dbReference>
<dbReference type="PDB" id="2ORB">
    <property type="method" value="X-ray"/>
    <property type="resolution" value="2.20 A"/>
    <property type="chains" value="L/M=1-111"/>
</dbReference>
<dbReference type="PDBsum" id="1MF2"/>
<dbReference type="PDBsum" id="2OR9"/>
<dbReference type="PDBsum" id="2ORB"/>
<dbReference type="SMR" id="P01654"/>
<dbReference type="FunCoup" id="P01654">
    <property type="interactions" value="736"/>
</dbReference>
<dbReference type="IntAct" id="P01654">
    <property type="interactions" value="1"/>
</dbReference>
<dbReference type="jPOST" id="P01654"/>
<dbReference type="PeptideAtlas" id="P01654"/>
<dbReference type="InParanoid" id="P01654"/>
<dbReference type="Proteomes" id="UP000000589">
    <property type="component" value="Unplaced"/>
</dbReference>
<dbReference type="RNAct" id="P01654">
    <property type="molecule type" value="protein"/>
</dbReference>
<dbReference type="GO" id="GO:0019814">
    <property type="term" value="C:immunoglobulin complex"/>
    <property type="evidence" value="ECO:0000318"/>
    <property type="project" value="GO_Central"/>
</dbReference>
<dbReference type="GO" id="GO:0002250">
    <property type="term" value="P:adaptive immune response"/>
    <property type="evidence" value="ECO:0007669"/>
    <property type="project" value="UniProtKB-KW"/>
</dbReference>
<dbReference type="GO" id="GO:0006955">
    <property type="term" value="P:immune response"/>
    <property type="evidence" value="ECO:0000318"/>
    <property type="project" value="GO_Central"/>
</dbReference>
<dbReference type="CDD" id="cd04980">
    <property type="entry name" value="IgV_L_kappa"/>
    <property type="match status" value="1"/>
</dbReference>
<dbReference type="FunFam" id="2.60.40.10:FF:000350">
    <property type="entry name" value="Immunoglobulin kappa chain variable 18-36"/>
    <property type="match status" value="1"/>
</dbReference>
<dbReference type="Gene3D" id="2.60.40.10">
    <property type="entry name" value="Immunoglobulins"/>
    <property type="match status" value="1"/>
</dbReference>
<dbReference type="InterPro" id="IPR007110">
    <property type="entry name" value="Ig-like_dom"/>
</dbReference>
<dbReference type="InterPro" id="IPR036179">
    <property type="entry name" value="Ig-like_dom_sf"/>
</dbReference>
<dbReference type="InterPro" id="IPR013783">
    <property type="entry name" value="Ig-like_fold"/>
</dbReference>
<dbReference type="InterPro" id="IPR003599">
    <property type="entry name" value="Ig_sub"/>
</dbReference>
<dbReference type="InterPro" id="IPR013106">
    <property type="entry name" value="Ig_V-set"/>
</dbReference>
<dbReference type="InterPro" id="IPR050150">
    <property type="entry name" value="IgV_Light_Chain"/>
</dbReference>
<dbReference type="PANTHER" id="PTHR23267">
    <property type="entry name" value="IMMUNOGLOBULIN LIGHT CHAIN"/>
    <property type="match status" value="1"/>
</dbReference>
<dbReference type="Pfam" id="PF07686">
    <property type="entry name" value="V-set"/>
    <property type="match status" value="1"/>
</dbReference>
<dbReference type="SMART" id="SM00409">
    <property type="entry name" value="IG"/>
    <property type="match status" value="1"/>
</dbReference>
<dbReference type="SMART" id="SM00406">
    <property type="entry name" value="IGv"/>
    <property type="match status" value="1"/>
</dbReference>
<dbReference type="SUPFAM" id="SSF48726">
    <property type="entry name" value="Immunoglobulin"/>
    <property type="match status" value="1"/>
</dbReference>
<dbReference type="PROSITE" id="PS50835">
    <property type="entry name" value="IG_LIKE"/>
    <property type="match status" value="1"/>
</dbReference>
<organism>
    <name type="scientific">Mus musculus</name>
    <name type="common">Mouse</name>
    <dbReference type="NCBI Taxonomy" id="10090"/>
    <lineage>
        <taxon>Eukaryota</taxon>
        <taxon>Metazoa</taxon>
        <taxon>Chordata</taxon>
        <taxon>Craniata</taxon>
        <taxon>Vertebrata</taxon>
        <taxon>Euteleostomi</taxon>
        <taxon>Mammalia</taxon>
        <taxon>Eutheria</taxon>
        <taxon>Euarchontoglires</taxon>
        <taxon>Glires</taxon>
        <taxon>Rodentia</taxon>
        <taxon>Myomorpha</taxon>
        <taxon>Muroidea</taxon>
        <taxon>Muridae</taxon>
        <taxon>Murinae</taxon>
        <taxon>Mus</taxon>
        <taxon>Mus</taxon>
    </lineage>
</organism>
<name>KV3A1_MOUSE</name>
<keyword id="KW-0002">3D-structure</keyword>
<keyword id="KW-1064">Adaptive immunity</keyword>
<keyword id="KW-0903">Direct protein sequencing</keyword>
<keyword id="KW-1015">Disulfide bond</keyword>
<keyword id="KW-0391">Immunity</keyword>
<keyword id="KW-1280">Immunoglobulin</keyword>
<keyword id="KW-1185">Reference proteome</keyword>
<proteinExistence type="evidence at protein level"/>
<protein>
    <recommendedName>
        <fullName>Ig kappa chain V-III region PC 2880/PC 1229</fullName>
    </recommendedName>
</protein>